<sequence>MSEKQTPVKELTLQEAQDEIKPLRAKLTKWGKEYYEQDNPTVEDHVYDRAYQRLVQLEEQFPQLVSADSPTQRVGGATESQLTKVRHEIPMLSMGDVFSIEELMDFNQRQQENRDVEVEPEYNLELKIDGLSLSLVYENGKLVQGSTRGNGTIGEDVTANVRTIKSVPAELPEPLSIEVRGECYMPKAAFAKLNAKREAEGLPVFANPRNAAAGSLRQLDPKVTAQRELDTFMYYVPEYQKIGVKTQAEALDRMRELGFNVNPNNRVVHNRDEIEKYIEEYTAQRDKLTYGIDGIVEKVNDLDTEVALGNTVKVPRWEIAYKFPPEEQATIVRDIVWTVGRTGNVTPTAVMDPVQLAGTTVSRASLHNPDYLREKDIRIGDTVYLHKAGDIIPEISKVDLTKRPADSVEYEIPTKCPVCGSELVHLDGEVALRCINPMCPAQIKEGLAHFASRNAMNIDGLGPRIIEQLWDKELIHDVAGLYRLNHDQLLTLDKFGEKSTANLLTSIDNSRNNSVERLLFGLGIRHVGAKAARIIMEHFGDLDSLMKADADEISAISGIGPTIGESIVTYFANQQVVKLIDELREVGVNFAYLGSRSNANPDSEWNGRRVVLTGKLTEMTRGEAKSWLENHGAKVTESVSKKTDIVIAGADAGSKLTKAQNLGIDVWNEQQFSQAMKEEQ</sequence>
<keyword id="KW-0227">DNA damage</keyword>
<keyword id="KW-0234">DNA repair</keyword>
<keyword id="KW-0235">DNA replication</keyword>
<keyword id="KW-0436">Ligase</keyword>
<keyword id="KW-0460">Magnesium</keyword>
<keyword id="KW-0464">Manganese</keyword>
<keyword id="KW-0479">Metal-binding</keyword>
<keyword id="KW-0520">NAD</keyword>
<keyword id="KW-0862">Zinc</keyword>
<feature type="chain" id="PRO_0000380405" description="DNA ligase">
    <location>
        <begin position="1"/>
        <end position="680"/>
    </location>
</feature>
<feature type="domain" description="BRCT" evidence="1">
    <location>
        <begin position="600"/>
        <end position="680"/>
    </location>
</feature>
<feature type="active site" description="N6-AMP-lysine intermediate" evidence="1">
    <location>
        <position position="127"/>
    </location>
</feature>
<feature type="binding site" evidence="1">
    <location>
        <begin position="44"/>
        <end position="48"/>
    </location>
    <ligand>
        <name>NAD(+)</name>
        <dbReference type="ChEBI" id="CHEBI:57540"/>
    </ligand>
</feature>
<feature type="binding site" evidence="1">
    <location>
        <begin position="93"/>
        <end position="94"/>
    </location>
    <ligand>
        <name>NAD(+)</name>
        <dbReference type="ChEBI" id="CHEBI:57540"/>
    </ligand>
</feature>
<feature type="binding site" evidence="1">
    <location>
        <position position="125"/>
    </location>
    <ligand>
        <name>NAD(+)</name>
        <dbReference type="ChEBI" id="CHEBI:57540"/>
    </ligand>
</feature>
<feature type="binding site" evidence="1">
    <location>
        <position position="148"/>
    </location>
    <ligand>
        <name>NAD(+)</name>
        <dbReference type="ChEBI" id="CHEBI:57540"/>
    </ligand>
</feature>
<feature type="binding site" evidence="1">
    <location>
        <position position="182"/>
    </location>
    <ligand>
        <name>NAD(+)</name>
        <dbReference type="ChEBI" id="CHEBI:57540"/>
    </ligand>
</feature>
<feature type="binding site" evidence="1">
    <location>
        <position position="298"/>
    </location>
    <ligand>
        <name>NAD(+)</name>
        <dbReference type="ChEBI" id="CHEBI:57540"/>
    </ligand>
</feature>
<feature type="binding site" evidence="1">
    <location>
        <position position="322"/>
    </location>
    <ligand>
        <name>NAD(+)</name>
        <dbReference type="ChEBI" id="CHEBI:57540"/>
    </ligand>
</feature>
<feature type="binding site" evidence="1">
    <location>
        <position position="416"/>
    </location>
    <ligand>
        <name>Zn(2+)</name>
        <dbReference type="ChEBI" id="CHEBI:29105"/>
    </ligand>
</feature>
<feature type="binding site" evidence="1">
    <location>
        <position position="419"/>
    </location>
    <ligand>
        <name>Zn(2+)</name>
        <dbReference type="ChEBI" id="CHEBI:29105"/>
    </ligand>
</feature>
<feature type="binding site" evidence="1">
    <location>
        <position position="434"/>
    </location>
    <ligand>
        <name>Zn(2+)</name>
        <dbReference type="ChEBI" id="CHEBI:29105"/>
    </ligand>
</feature>
<feature type="binding site" evidence="1">
    <location>
        <position position="439"/>
    </location>
    <ligand>
        <name>Zn(2+)</name>
        <dbReference type="ChEBI" id="CHEBI:29105"/>
    </ligand>
</feature>
<protein>
    <recommendedName>
        <fullName evidence="1">DNA ligase</fullName>
        <ecNumber evidence="1">6.5.1.2</ecNumber>
    </recommendedName>
    <alternativeName>
        <fullName evidence="1">Polydeoxyribonucleotide synthase [NAD(+)]</fullName>
    </alternativeName>
</protein>
<dbReference type="EC" id="6.5.1.2" evidence="1"/>
<dbReference type="EMBL" id="AP007281">
    <property type="protein sequence ID" value="BAG25871.1"/>
    <property type="molecule type" value="Genomic_DNA"/>
</dbReference>
<dbReference type="RefSeq" id="WP_003668761.1">
    <property type="nucleotide sequence ID" value="NC_010609.1"/>
</dbReference>
<dbReference type="SMR" id="B2G8T9"/>
<dbReference type="KEGG" id="lrf:LAR_1355"/>
<dbReference type="HOGENOM" id="CLU_007764_2_1_9"/>
<dbReference type="GO" id="GO:0005829">
    <property type="term" value="C:cytosol"/>
    <property type="evidence" value="ECO:0007669"/>
    <property type="project" value="TreeGrafter"/>
</dbReference>
<dbReference type="GO" id="GO:0003911">
    <property type="term" value="F:DNA ligase (NAD+) activity"/>
    <property type="evidence" value="ECO:0007669"/>
    <property type="project" value="UniProtKB-UniRule"/>
</dbReference>
<dbReference type="GO" id="GO:0046872">
    <property type="term" value="F:metal ion binding"/>
    <property type="evidence" value="ECO:0007669"/>
    <property type="project" value="UniProtKB-KW"/>
</dbReference>
<dbReference type="GO" id="GO:0006281">
    <property type="term" value="P:DNA repair"/>
    <property type="evidence" value="ECO:0007669"/>
    <property type="project" value="UniProtKB-KW"/>
</dbReference>
<dbReference type="GO" id="GO:0006260">
    <property type="term" value="P:DNA replication"/>
    <property type="evidence" value="ECO:0007669"/>
    <property type="project" value="UniProtKB-KW"/>
</dbReference>
<dbReference type="CDD" id="cd17748">
    <property type="entry name" value="BRCT_DNA_ligase_like"/>
    <property type="match status" value="1"/>
</dbReference>
<dbReference type="CDD" id="cd00114">
    <property type="entry name" value="LIGANc"/>
    <property type="match status" value="1"/>
</dbReference>
<dbReference type="FunFam" id="1.10.150.20:FF:000006">
    <property type="entry name" value="DNA ligase"/>
    <property type="match status" value="1"/>
</dbReference>
<dbReference type="FunFam" id="1.10.150.20:FF:000007">
    <property type="entry name" value="DNA ligase"/>
    <property type="match status" value="1"/>
</dbReference>
<dbReference type="FunFam" id="2.40.50.140:FF:000012">
    <property type="entry name" value="DNA ligase"/>
    <property type="match status" value="1"/>
</dbReference>
<dbReference type="FunFam" id="3.30.470.30:FF:000001">
    <property type="entry name" value="DNA ligase"/>
    <property type="match status" value="1"/>
</dbReference>
<dbReference type="Gene3D" id="6.20.10.30">
    <property type="match status" value="1"/>
</dbReference>
<dbReference type="Gene3D" id="1.10.150.20">
    <property type="entry name" value="5' to 3' exonuclease, C-terminal subdomain"/>
    <property type="match status" value="2"/>
</dbReference>
<dbReference type="Gene3D" id="3.40.50.10190">
    <property type="entry name" value="BRCT domain"/>
    <property type="match status" value="1"/>
</dbReference>
<dbReference type="Gene3D" id="3.30.470.30">
    <property type="entry name" value="DNA ligase/mRNA capping enzyme"/>
    <property type="match status" value="1"/>
</dbReference>
<dbReference type="Gene3D" id="1.10.287.610">
    <property type="entry name" value="Helix hairpin bin"/>
    <property type="match status" value="1"/>
</dbReference>
<dbReference type="Gene3D" id="2.40.50.140">
    <property type="entry name" value="Nucleic acid-binding proteins"/>
    <property type="match status" value="1"/>
</dbReference>
<dbReference type="HAMAP" id="MF_01588">
    <property type="entry name" value="DNA_ligase_A"/>
    <property type="match status" value="1"/>
</dbReference>
<dbReference type="InterPro" id="IPR001357">
    <property type="entry name" value="BRCT_dom"/>
</dbReference>
<dbReference type="InterPro" id="IPR036420">
    <property type="entry name" value="BRCT_dom_sf"/>
</dbReference>
<dbReference type="InterPro" id="IPR041663">
    <property type="entry name" value="DisA/LigA_HHH"/>
</dbReference>
<dbReference type="InterPro" id="IPR001679">
    <property type="entry name" value="DNA_ligase"/>
</dbReference>
<dbReference type="InterPro" id="IPR018239">
    <property type="entry name" value="DNA_ligase_AS"/>
</dbReference>
<dbReference type="InterPro" id="IPR033136">
    <property type="entry name" value="DNA_ligase_CS"/>
</dbReference>
<dbReference type="InterPro" id="IPR013839">
    <property type="entry name" value="DNAligase_adenylation"/>
</dbReference>
<dbReference type="InterPro" id="IPR013840">
    <property type="entry name" value="DNAligase_N"/>
</dbReference>
<dbReference type="InterPro" id="IPR012340">
    <property type="entry name" value="NA-bd_OB-fold"/>
</dbReference>
<dbReference type="InterPro" id="IPR004150">
    <property type="entry name" value="NAD_DNA_ligase_OB"/>
</dbReference>
<dbReference type="InterPro" id="IPR010994">
    <property type="entry name" value="RuvA_2-like"/>
</dbReference>
<dbReference type="InterPro" id="IPR004149">
    <property type="entry name" value="Znf_DNAligase_C4"/>
</dbReference>
<dbReference type="NCBIfam" id="TIGR00575">
    <property type="entry name" value="dnlj"/>
    <property type="match status" value="1"/>
</dbReference>
<dbReference type="NCBIfam" id="NF005932">
    <property type="entry name" value="PRK07956.1"/>
    <property type="match status" value="1"/>
</dbReference>
<dbReference type="PANTHER" id="PTHR23389">
    <property type="entry name" value="CHROMOSOME TRANSMISSION FIDELITY FACTOR 18"/>
    <property type="match status" value="1"/>
</dbReference>
<dbReference type="PANTHER" id="PTHR23389:SF9">
    <property type="entry name" value="DNA LIGASE"/>
    <property type="match status" value="1"/>
</dbReference>
<dbReference type="Pfam" id="PF00533">
    <property type="entry name" value="BRCT"/>
    <property type="match status" value="1"/>
</dbReference>
<dbReference type="Pfam" id="PF01653">
    <property type="entry name" value="DNA_ligase_aden"/>
    <property type="match status" value="1"/>
</dbReference>
<dbReference type="Pfam" id="PF03120">
    <property type="entry name" value="DNA_ligase_OB"/>
    <property type="match status" value="1"/>
</dbReference>
<dbReference type="Pfam" id="PF03119">
    <property type="entry name" value="DNA_ligase_ZBD"/>
    <property type="match status" value="1"/>
</dbReference>
<dbReference type="Pfam" id="PF12826">
    <property type="entry name" value="HHH_2"/>
    <property type="match status" value="1"/>
</dbReference>
<dbReference type="PIRSF" id="PIRSF001604">
    <property type="entry name" value="LigA"/>
    <property type="match status" value="1"/>
</dbReference>
<dbReference type="SMART" id="SM00292">
    <property type="entry name" value="BRCT"/>
    <property type="match status" value="1"/>
</dbReference>
<dbReference type="SMART" id="SM00532">
    <property type="entry name" value="LIGANc"/>
    <property type="match status" value="1"/>
</dbReference>
<dbReference type="SUPFAM" id="SSF52113">
    <property type="entry name" value="BRCT domain"/>
    <property type="match status" value="1"/>
</dbReference>
<dbReference type="SUPFAM" id="SSF56091">
    <property type="entry name" value="DNA ligase/mRNA capping enzyme, catalytic domain"/>
    <property type="match status" value="1"/>
</dbReference>
<dbReference type="SUPFAM" id="SSF50249">
    <property type="entry name" value="Nucleic acid-binding proteins"/>
    <property type="match status" value="1"/>
</dbReference>
<dbReference type="SUPFAM" id="SSF47781">
    <property type="entry name" value="RuvA domain 2-like"/>
    <property type="match status" value="1"/>
</dbReference>
<dbReference type="PROSITE" id="PS50172">
    <property type="entry name" value="BRCT"/>
    <property type="match status" value="1"/>
</dbReference>
<dbReference type="PROSITE" id="PS01055">
    <property type="entry name" value="DNA_LIGASE_N1"/>
    <property type="match status" value="1"/>
</dbReference>
<dbReference type="PROSITE" id="PS01056">
    <property type="entry name" value="DNA_LIGASE_N2"/>
    <property type="match status" value="1"/>
</dbReference>
<accession>B2G8T9</accession>
<name>DNLJ_LIMRJ</name>
<comment type="function">
    <text evidence="1">DNA ligase that catalyzes the formation of phosphodiester linkages between 5'-phosphoryl and 3'-hydroxyl groups in double-stranded DNA using NAD as a coenzyme and as the energy source for the reaction. It is essential for DNA replication and repair of damaged DNA.</text>
</comment>
<comment type="catalytic activity">
    <reaction evidence="1">
        <text>NAD(+) + (deoxyribonucleotide)n-3'-hydroxyl + 5'-phospho-(deoxyribonucleotide)m = (deoxyribonucleotide)n+m + AMP + beta-nicotinamide D-nucleotide.</text>
        <dbReference type="EC" id="6.5.1.2"/>
    </reaction>
</comment>
<comment type="cofactor">
    <cofactor evidence="1">
        <name>Mg(2+)</name>
        <dbReference type="ChEBI" id="CHEBI:18420"/>
    </cofactor>
    <cofactor evidence="1">
        <name>Mn(2+)</name>
        <dbReference type="ChEBI" id="CHEBI:29035"/>
    </cofactor>
</comment>
<comment type="similarity">
    <text evidence="1">Belongs to the NAD-dependent DNA ligase family. LigA subfamily.</text>
</comment>
<organism>
    <name type="scientific">Limosilactobacillus reuteri subsp. reuteri (strain JCM 1112)</name>
    <name type="common">Lactobacillus reuteri</name>
    <dbReference type="NCBI Taxonomy" id="557433"/>
    <lineage>
        <taxon>Bacteria</taxon>
        <taxon>Bacillati</taxon>
        <taxon>Bacillota</taxon>
        <taxon>Bacilli</taxon>
        <taxon>Lactobacillales</taxon>
        <taxon>Lactobacillaceae</taxon>
        <taxon>Limosilactobacillus</taxon>
    </lineage>
</organism>
<proteinExistence type="inferred from homology"/>
<evidence type="ECO:0000255" key="1">
    <source>
        <dbReference type="HAMAP-Rule" id="MF_01588"/>
    </source>
</evidence>
<reference key="1">
    <citation type="journal article" date="2008" name="DNA Res.">
        <title>Comparative genome analysis of Lactobacillus reuteri and Lactobacillus fermentum reveal a genomic island for reuterin and cobalamin production.</title>
        <authorList>
            <person name="Morita H."/>
            <person name="Toh H."/>
            <person name="Fukuda S."/>
            <person name="Horikawa H."/>
            <person name="Oshima K."/>
            <person name="Suzuki T."/>
            <person name="Murakami M."/>
            <person name="Hisamatsu S."/>
            <person name="Kato Y."/>
            <person name="Takizawa T."/>
            <person name="Fukuoka H."/>
            <person name="Yoshimura T."/>
            <person name="Itoh K."/>
            <person name="O'Sullivan D.J."/>
            <person name="McKay L.L."/>
            <person name="Ohno H."/>
            <person name="Kikuchi J."/>
            <person name="Masaoka T."/>
            <person name="Hattori M."/>
        </authorList>
    </citation>
    <scope>NUCLEOTIDE SEQUENCE [LARGE SCALE GENOMIC DNA]</scope>
    <source>
        <strain>JCM 1112</strain>
    </source>
</reference>
<gene>
    <name evidence="1" type="primary">ligA</name>
    <name type="ordered locus">LAR_1355</name>
</gene>